<proteinExistence type="inferred from homology"/>
<dbReference type="EC" id="5.2.1.8"/>
<dbReference type="EMBL" id="CR382135">
    <property type="protein sequence ID" value="CAG86298.2"/>
    <property type="molecule type" value="Genomic_DNA"/>
</dbReference>
<dbReference type="RefSeq" id="XP_458222.2">
    <property type="nucleotide sequence ID" value="XM_458222.1"/>
</dbReference>
<dbReference type="SMR" id="Q6BU97"/>
<dbReference type="FunCoup" id="Q6BU97">
    <property type="interactions" value="554"/>
</dbReference>
<dbReference type="STRING" id="284592.Q6BU97"/>
<dbReference type="GeneID" id="2900031"/>
<dbReference type="KEGG" id="dha:DEHA2C12584g"/>
<dbReference type="VEuPathDB" id="FungiDB:DEHA2C12584g"/>
<dbReference type="eggNOG" id="KOG2867">
    <property type="taxonomic scope" value="Eukaryota"/>
</dbReference>
<dbReference type="HOGENOM" id="CLU_030733_0_0_1"/>
<dbReference type="InParanoid" id="Q6BU97"/>
<dbReference type="OMA" id="YLWGAAQ"/>
<dbReference type="OrthoDB" id="16120at2759"/>
<dbReference type="Proteomes" id="UP000000599">
    <property type="component" value="Chromosome C"/>
</dbReference>
<dbReference type="GO" id="GO:0005737">
    <property type="term" value="C:cytoplasm"/>
    <property type="evidence" value="ECO:0007669"/>
    <property type="project" value="UniProtKB-SubCell"/>
</dbReference>
<dbReference type="GO" id="GO:0005634">
    <property type="term" value="C:nucleus"/>
    <property type="evidence" value="ECO:0007669"/>
    <property type="project" value="TreeGrafter"/>
</dbReference>
<dbReference type="GO" id="GO:0000159">
    <property type="term" value="C:protein phosphatase type 2A complex"/>
    <property type="evidence" value="ECO:0007669"/>
    <property type="project" value="EnsemblFungi"/>
</dbReference>
<dbReference type="GO" id="GO:0003755">
    <property type="term" value="F:peptidyl-prolyl cis-trans isomerase activity"/>
    <property type="evidence" value="ECO:0007669"/>
    <property type="project" value="UniProtKB-KW"/>
</dbReference>
<dbReference type="GO" id="GO:0008160">
    <property type="term" value="F:protein tyrosine phosphatase activator activity"/>
    <property type="evidence" value="ECO:0007669"/>
    <property type="project" value="TreeGrafter"/>
</dbReference>
<dbReference type="GO" id="GO:0007052">
    <property type="term" value="P:mitotic spindle organization"/>
    <property type="evidence" value="ECO:0007669"/>
    <property type="project" value="EnsemblFungi"/>
</dbReference>
<dbReference type="GO" id="GO:0006970">
    <property type="term" value="P:response to osmotic stress"/>
    <property type="evidence" value="ECO:0007669"/>
    <property type="project" value="EnsemblFungi"/>
</dbReference>
<dbReference type="CDD" id="cd04087">
    <property type="entry name" value="PTPA"/>
    <property type="match status" value="1"/>
</dbReference>
<dbReference type="FunFam" id="1.20.120.1150:FF:000002">
    <property type="entry name" value="Serine/threonine-protein phosphatase 2A activator"/>
    <property type="match status" value="1"/>
</dbReference>
<dbReference type="Gene3D" id="1.20.120.1150">
    <property type="match status" value="1"/>
</dbReference>
<dbReference type="InterPro" id="IPR004327">
    <property type="entry name" value="Phstyr_phstse_ac"/>
</dbReference>
<dbReference type="InterPro" id="IPR043170">
    <property type="entry name" value="PTPA_C_lid"/>
</dbReference>
<dbReference type="InterPro" id="IPR037218">
    <property type="entry name" value="PTPA_sf"/>
</dbReference>
<dbReference type="PANTHER" id="PTHR10012">
    <property type="entry name" value="SERINE/THREONINE-PROTEIN PHOSPHATASE 2A REGULATORY SUBUNIT B"/>
    <property type="match status" value="1"/>
</dbReference>
<dbReference type="PANTHER" id="PTHR10012:SF5">
    <property type="entry name" value="SERINE_THREONINE-PROTEIN PHOSPHATASE 2A ACTIVATOR 2"/>
    <property type="match status" value="1"/>
</dbReference>
<dbReference type="Pfam" id="PF03095">
    <property type="entry name" value="PTPA"/>
    <property type="match status" value="1"/>
</dbReference>
<dbReference type="PIRSF" id="PIRSF016325">
    <property type="entry name" value="Phstyr_phstse_ac"/>
    <property type="match status" value="1"/>
</dbReference>
<dbReference type="SUPFAM" id="SSF140984">
    <property type="entry name" value="PTPA-like"/>
    <property type="match status" value="1"/>
</dbReference>
<reference key="1">
    <citation type="journal article" date="2004" name="Nature">
        <title>Genome evolution in yeasts.</title>
        <authorList>
            <person name="Dujon B."/>
            <person name="Sherman D."/>
            <person name="Fischer G."/>
            <person name="Durrens P."/>
            <person name="Casaregola S."/>
            <person name="Lafontaine I."/>
            <person name="de Montigny J."/>
            <person name="Marck C."/>
            <person name="Neuveglise C."/>
            <person name="Talla E."/>
            <person name="Goffard N."/>
            <person name="Frangeul L."/>
            <person name="Aigle M."/>
            <person name="Anthouard V."/>
            <person name="Babour A."/>
            <person name="Barbe V."/>
            <person name="Barnay S."/>
            <person name="Blanchin S."/>
            <person name="Beckerich J.-M."/>
            <person name="Beyne E."/>
            <person name="Bleykasten C."/>
            <person name="Boisrame A."/>
            <person name="Boyer J."/>
            <person name="Cattolico L."/>
            <person name="Confanioleri F."/>
            <person name="de Daruvar A."/>
            <person name="Despons L."/>
            <person name="Fabre E."/>
            <person name="Fairhead C."/>
            <person name="Ferry-Dumazet H."/>
            <person name="Groppi A."/>
            <person name="Hantraye F."/>
            <person name="Hennequin C."/>
            <person name="Jauniaux N."/>
            <person name="Joyet P."/>
            <person name="Kachouri R."/>
            <person name="Kerrest A."/>
            <person name="Koszul R."/>
            <person name="Lemaire M."/>
            <person name="Lesur I."/>
            <person name="Ma L."/>
            <person name="Muller H."/>
            <person name="Nicaud J.-M."/>
            <person name="Nikolski M."/>
            <person name="Oztas S."/>
            <person name="Ozier-Kalogeropoulos O."/>
            <person name="Pellenz S."/>
            <person name="Potier S."/>
            <person name="Richard G.-F."/>
            <person name="Straub M.-L."/>
            <person name="Suleau A."/>
            <person name="Swennen D."/>
            <person name="Tekaia F."/>
            <person name="Wesolowski-Louvel M."/>
            <person name="Westhof E."/>
            <person name="Wirth B."/>
            <person name="Zeniou-Meyer M."/>
            <person name="Zivanovic Y."/>
            <person name="Bolotin-Fukuhara M."/>
            <person name="Thierry A."/>
            <person name="Bouchier C."/>
            <person name="Caudron B."/>
            <person name="Scarpelli C."/>
            <person name="Gaillardin C."/>
            <person name="Weissenbach J."/>
            <person name="Wincker P."/>
            <person name="Souciet J.-L."/>
        </authorList>
    </citation>
    <scope>NUCLEOTIDE SEQUENCE [LARGE SCALE GENOMIC DNA]</scope>
    <source>
        <strain>ATCC 36239 / CBS 767 / BCRC 21394 / JCM 1990 / NBRC 0083 / IGC 2968</strain>
    </source>
</reference>
<organism>
    <name type="scientific">Debaryomyces hansenii (strain ATCC 36239 / CBS 767 / BCRC 21394 / JCM 1990 / NBRC 0083 / IGC 2968)</name>
    <name type="common">Yeast</name>
    <name type="synonym">Torulaspora hansenii</name>
    <dbReference type="NCBI Taxonomy" id="284592"/>
    <lineage>
        <taxon>Eukaryota</taxon>
        <taxon>Fungi</taxon>
        <taxon>Dikarya</taxon>
        <taxon>Ascomycota</taxon>
        <taxon>Saccharomycotina</taxon>
        <taxon>Pichiomycetes</taxon>
        <taxon>Debaryomycetaceae</taxon>
        <taxon>Debaryomyces</taxon>
    </lineage>
</organism>
<name>PTPA2_DEBHA</name>
<sequence length="367" mass="42020">MTAEYTKPVRRITNTEDLEIWNGSQAYSTILDFVQDLQDSVVGLTNDAQVTVSSSSEELLKVLDKVNEIIENNPVVHEKDISRFGKIEFRDFYDEICKKSFDILKPLVEKLEDDPRIELATYFNESWGNRTRIDYGSGHELNFIAFLACLQKLGIIKHEDYPCVIVRVFTKYMTVMRALQKLYWLEPAGSHGVWGLDDYHFLPFLFGSSQLATHPHMKPKSIHNEELVESFYKQYMYLECIHFINTIKTTPANQDQKLSLRWHSPMLDDISSAKSWAKIKEGMIKMYKAEVLGKLPIVQHFMFGSIIPCPDGVSEYHEHDDDSDCGHDHGGTVNTWGDCCGIKIPSALAASEMNKINNPNNKPIPFD</sequence>
<keyword id="KW-0963">Cytoplasm</keyword>
<keyword id="KW-0413">Isomerase</keyword>
<keyword id="KW-1185">Reference proteome</keyword>
<keyword id="KW-0697">Rotamase</keyword>
<comment type="function">
    <text evidence="1">PPIases accelerate the folding of proteins. It catalyzes the cis-trans isomerization of proline imidic peptide bonds in oligopeptides. Acts as a regulatory subunit for PP2A-like phosphatases modulating their activity or substrate specificity, probably by inducing a conformational change in the catalytic subunit, a direct target of the PPIase. Can reactivate inactive phosphatase PP2A-phosphatase methylesterase complexes (PP2Ai) in presence of ATP and Mg(2+) by dissociating the inactive form from the complex (By similarity).</text>
</comment>
<comment type="catalytic activity">
    <reaction>
        <text>[protein]-peptidylproline (omega=180) = [protein]-peptidylproline (omega=0)</text>
        <dbReference type="Rhea" id="RHEA:16237"/>
        <dbReference type="Rhea" id="RHEA-COMP:10747"/>
        <dbReference type="Rhea" id="RHEA-COMP:10748"/>
        <dbReference type="ChEBI" id="CHEBI:83833"/>
        <dbReference type="ChEBI" id="CHEBI:83834"/>
        <dbReference type="EC" id="5.2.1.8"/>
    </reaction>
</comment>
<comment type="subcellular location">
    <subcellularLocation>
        <location evidence="1">Cytoplasm</location>
    </subcellularLocation>
</comment>
<comment type="similarity">
    <text evidence="2">Belongs to the PTPA-type PPIase family.</text>
</comment>
<evidence type="ECO:0000250" key="1"/>
<evidence type="ECO:0000305" key="2"/>
<accession>Q6BU97</accession>
<gene>
    <name type="primary">RRD2</name>
    <name type="ordered locus">DEHA2C12584g</name>
</gene>
<feature type="chain" id="PRO_0000226112" description="Serine/threonine-protein phosphatase 2A activator 2">
    <location>
        <begin position="1"/>
        <end position="367"/>
    </location>
</feature>
<protein>
    <recommendedName>
        <fullName>Serine/threonine-protein phosphatase 2A activator 2</fullName>
        <ecNumber>5.2.1.8</ecNumber>
    </recommendedName>
    <alternativeName>
        <fullName>Peptidyl-prolyl cis-trans isomerase PTPA-2</fullName>
        <shortName>PPIase PTPA-2</shortName>
        <shortName>Rotamase PTPA-2</shortName>
    </alternativeName>
    <alternativeName>
        <fullName>Phosphotyrosyl phosphatase activator 2</fullName>
    </alternativeName>
</protein>